<sequence length="300" mass="33339">MGDKIVRATAANGGIRLVAVLTTNATREAKKRHGLSYLTSSILGRAFSASLLLASSMKIMHGRVTLRVRSDGPLKGLLVDAGRDGKVRGYVGNPNLELDLVKTKSNKYSFDFTKALGTGYLNIIRDNGFGEPFTSTVELVNGNIAEDLASYLYHSEQTPSAVFIGEKIQNKNLICSGGLLAQVLPKKETDPLLVSLLEDRCKEINSFSEDLFESKDDLLSIIKNIFPDIDDKSISENARTQEVRFECRCSKQRSLNAMKMLDKDELEDILKKEGKAELVCEFCKNKYLINFEEIEEMIKA</sequence>
<evidence type="ECO:0000255" key="1">
    <source>
        <dbReference type="HAMAP-Rule" id="MF_00117"/>
    </source>
</evidence>
<protein>
    <recommendedName>
        <fullName evidence="1">33 kDa chaperonin</fullName>
    </recommendedName>
    <alternativeName>
        <fullName evidence="1">Heat shock protein 33 homolog</fullName>
        <shortName evidence="1">HSP33</shortName>
    </alternativeName>
</protein>
<keyword id="KW-0143">Chaperone</keyword>
<keyword id="KW-0963">Cytoplasm</keyword>
<keyword id="KW-1015">Disulfide bond</keyword>
<keyword id="KW-0676">Redox-active center</keyword>
<keyword id="KW-0862">Zinc</keyword>
<reference key="1">
    <citation type="journal article" date="2007" name="PLoS Genet.">
        <title>Patterns and implications of gene gain and loss in the evolution of Prochlorococcus.</title>
        <authorList>
            <person name="Kettler G.C."/>
            <person name="Martiny A.C."/>
            <person name="Huang K."/>
            <person name="Zucker J."/>
            <person name="Coleman M.L."/>
            <person name="Rodrigue S."/>
            <person name="Chen F."/>
            <person name="Lapidus A."/>
            <person name="Ferriera S."/>
            <person name="Johnson J."/>
            <person name="Steglich C."/>
            <person name="Church G.M."/>
            <person name="Richardson P."/>
            <person name="Chisholm S.W."/>
        </authorList>
    </citation>
    <scope>NUCLEOTIDE SEQUENCE [LARGE SCALE GENOMIC DNA]</scope>
    <source>
        <strain>MIT 9515</strain>
    </source>
</reference>
<organism>
    <name type="scientific">Prochlorococcus marinus (strain MIT 9515)</name>
    <dbReference type="NCBI Taxonomy" id="167542"/>
    <lineage>
        <taxon>Bacteria</taxon>
        <taxon>Bacillati</taxon>
        <taxon>Cyanobacteriota</taxon>
        <taxon>Cyanophyceae</taxon>
        <taxon>Synechococcales</taxon>
        <taxon>Prochlorococcaceae</taxon>
        <taxon>Prochlorococcus</taxon>
    </lineage>
</organism>
<feature type="chain" id="PRO_1000015556" description="33 kDa chaperonin">
    <location>
        <begin position="1"/>
        <end position="300"/>
    </location>
</feature>
<feature type="disulfide bond" description="Redox-active" evidence="1">
    <location>
        <begin position="247"/>
        <end position="249"/>
    </location>
</feature>
<feature type="disulfide bond" description="Redox-active" evidence="1">
    <location>
        <begin position="280"/>
        <end position="283"/>
    </location>
</feature>
<gene>
    <name evidence="1" type="primary">hslO</name>
    <name type="ordered locus">P9515_07381</name>
</gene>
<accession>A2BVY6</accession>
<dbReference type="EMBL" id="CP000552">
    <property type="protein sequence ID" value="ABM71947.1"/>
    <property type="molecule type" value="Genomic_DNA"/>
</dbReference>
<dbReference type="RefSeq" id="WP_011820052.1">
    <property type="nucleotide sequence ID" value="NC_008817.1"/>
</dbReference>
<dbReference type="SMR" id="A2BVY6"/>
<dbReference type="STRING" id="167542.P9515_07381"/>
<dbReference type="GeneID" id="60200753"/>
<dbReference type="KEGG" id="pmc:P9515_07381"/>
<dbReference type="eggNOG" id="COG1281">
    <property type="taxonomic scope" value="Bacteria"/>
</dbReference>
<dbReference type="HOGENOM" id="CLU_054493_1_0_3"/>
<dbReference type="OrthoDB" id="9776534at2"/>
<dbReference type="Proteomes" id="UP000001589">
    <property type="component" value="Chromosome"/>
</dbReference>
<dbReference type="GO" id="GO:0005737">
    <property type="term" value="C:cytoplasm"/>
    <property type="evidence" value="ECO:0007669"/>
    <property type="project" value="UniProtKB-SubCell"/>
</dbReference>
<dbReference type="GO" id="GO:0044183">
    <property type="term" value="F:protein folding chaperone"/>
    <property type="evidence" value="ECO:0007669"/>
    <property type="project" value="TreeGrafter"/>
</dbReference>
<dbReference type="GO" id="GO:0051082">
    <property type="term" value="F:unfolded protein binding"/>
    <property type="evidence" value="ECO:0007669"/>
    <property type="project" value="UniProtKB-UniRule"/>
</dbReference>
<dbReference type="GO" id="GO:0042026">
    <property type="term" value="P:protein refolding"/>
    <property type="evidence" value="ECO:0007669"/>
    <property type="project" value="TreeGrafter"/>
</dbReference>
<dbReference type="CDD" id="cd00498">
    <property type="entry name" value="Hsp33"/>
    <property type="match status" value="1"/>
</dbReference>
<dbReference type="Gene3D" id="3.55.30.10">
    <property type="entry name" value="Hsp33 domain"/>
    <property type="match status" value="1"/>
</dbReference>
<dbReference type="Gene3D" id="3.90.1280.10">
    <property type="entry name" value="HSP33 redox switch-like"/>
    <property type="match status" value="1"/>
</dbReference>
<dbReference type="HAMAP" id="MF_00117">
    <property type="entry name" value="HslO"/>
    <property type="match status" value="1"/>
</dbReference>
<dbReference type="InterPro" id="IPR000397">
    <property type="entry name" value="Heat_shock_Hsp33"/>
</dbReference>
<dbReference type="InterPro" id="IPR016154">
    <property type="entry name" value="Heat_shock_Hsp33_C"/>
</dbReference>
<dbReference type="InterPro" id="IPR016153">
    <property type="entry name" value="Heat_shock_Hsp33_N"/>
</dbReference>
<dbReference type="NCBIfam" id="NF001033">
    <property type="entry name" value="PRK00114.1"/>
    <property type="match status" value="1"/>
</dbReference>
<dbReference type="PANTHER" id="PTHR30111">
    <property type="entry name" value="33 KDA CHAPERONIN"/>
    <property type="match status" value="1"/>
</dbReference>
<dbReference type="PANTHER" id="PTHR30111:SF1">
    <property type="entry name" value="33 KDA CHAPERONIN"/>
    <property type="match status" value="1"/>
</dbReference>
<dbReference type="Pfam" id="PF01430">
    <property type="entry name" value="HSP33"/>
    <property type="match status" value="1"/>
</dbReference>
<dbReference type="PIRSF" id="PIRSF005261">
    <property type="entry name" value="Heat_shock_Hsp33"/>
    <property type="match status" value="1"/>
</dbReference>
<dbReference type="SUPFAM" id="SSF64397">
    <property type="entry name" value="Hsp33 domain"/>
    <property type="match status" value="1"/>
</dbReference>
<dbReference type="SUPFAM" id="SSF118352">
    <property type="entry name" value="HSP33 redox switch-like"/>
    <property type="match status" value="1"/>
</dbReference>
<proteinExistence type="inferred from homology"/>
<name>HSLO_PROM5</name>
<comment type="function">
    <text evidence="1">Redox regulated molecular chaperone. Protects both thermally unfolding and oxidatively damaged proteins from irreversible aggregation. Plays an important role in the bacterial defense system toward oxidative stress.</text>
</comment>
<comment type="subcellular location">
    <subcellularLocation>
        <location evidence="1">Cytoplasm</location>
    </subcellularLocation>
</comment>
<comment type="PTM">
    <text evidence="1">Under oxidizing conditions two disulfide bonds are formed involving the reactive cysteines. Under reducing conditions zinc is bound to the reactive cysteines and the protein is inactive.</text>
</comment>
<comment type="similarity">
    <text evidence="1">Belongs to the HSP33 family.</text>
</comment>